<sequence length="162" mass="17337">MRLTSKGRYAVTAMLDVALNSEAGPVPLADISERQGISLSYLEQLFSRLRKNGLVSSVRGPGGGYLLGKDASSIAVGEVISAVDESVDATRCQGKGGCQGGDKCLTHALWRDLSDRLTGFLNNITLGELVNNQEVLDVSGRQHTHDAPRTRTQDAIDVKLRA</sequence>
<reference key="1">
    <citation type="journal article" date="2009" name="PLoS Genet.">
        <title>Organised genome dynamics in the Escherichia coli species results in highly diverse adaptive paths.</title>
        <authorList>
            <person name="Touchon M."/>
            <person name="Hoede C."/>
            <person name="Tenaillon O."/>
            <person name="Barbe V."/>
            <person name="Baeriswyl S."/>
            <person name="Bidet P."/>
            <person name="Bingen E."/>
            <person name="Bonacorsi S."/>
            <person name="Bouchier C."/>
            <person name="Bouvet O."/>
            <person name="Calteau A."/>
            <person name="Chiapello H."/>
            <person name="Clermont O."/>
            <person name="Cruveiller S."/>
            <person name="Danchin A."/>
            <person name="Diard M."/>
            <person name="Dossat C."/>
            <person name="Karoui M.E."/>
            <person name="Frapy E."/>
            <person name="Garry L."/>
            <person name="Ghigo J.M."/>
            <person name="Gilles A.M."/>
            <person name="Johnson J."/>
            <person name="Le Bouguenec C."/>
            <person name="Lescat M."/>
            <person name="Mangenot S."/>
            <person name="Martinez-Jehanne V."/>
            <person name="Matic I."/>
            <person name="Nassif X."/>
            <person name="Oztas S."/>
            <person name="Petit M.A."/>
            <person name="Pichon C."/>
            <person name="Rouy Z."/>
            <person name="Ruf C.S."/>
            <person name="Schneider D."/>
            <person name="Tourret J."/>
            <person name="Vacherie B."/>
            <person name="Vallenet D."/>
            <person name="Medigue C."/>
            <person name="Rocha E.P.C."/>
            <person name="Denamur E."/>
        </authorList>
    </citation>
    <scope>NUCLEOTIDE SEQUENCE [LARGE SCALE GENOMIC DNA]</scope>
    <source>
        <strain>55989 / EAEC</strain>
    </source>
</reference>
<organism>
    <name type="scientific">Escherichia coli (strain 55989 / EAEC)</name>
    <dbReference type="NCBI Taxonomy" id="585055"/>
    <lineage>
        <taxon>Bacteria</taxon>
        <taxon>Pseudomonadati</taxon>
        <taxon>Pseudomonadota</taxon>
        <taxon>Gammaproteobacteria</taxon>
        <taxon>Enterobacterales</taxon>
        <taxon>Enterobacteriaceae</taxon>
        <taxon>Escherichia</taxon>
    </lineage>
</organism>
<name>ISCR_ECO55</name>
<protein>
    <recommendedName>
        <fullName evidence="1">HTH-type transcriptional regulator IscR</fullName>
    </recommendedName>
</protein>
<evidence type="ECO:0000255" key="1">
    <source>
        <dbReference type="HAMAP-Rule" id="MF_01176"/>
    </source>
</evidence>
<evidence type="ECO:0000256" key="2">
    <source>
        <dbReference type="SAM" id="MobiDB-lite"/>
    </source>
</evidence>
<comment type="function">
    <text evidence="1">Regulates the transcription of several operons and genes involved in the biogenesis of Fe-S clusters and Fe-S-containing proteins.</text>
</comment>
<comment type="cofactor">
    <cofactor evidence="1">
        <name>[2Fe-2S] cluster</name>
        <dbReference type="ChEBI" id="CHEBI:190135"/>
    </cofactor>
    <text evidence="1">Binds 1 [2Fe-2S] cluster.</text>
</comment>
<gene>
    <name evidence="1" type="primary">iscR</name>
    <name type="ordered locus">EC55989_2816</name>
</gene>
<accession>B7LDC3</accession>
<dbReference type="EMBL" id="CU928145">
    <property type="protein sequence ID" value="CAU98689.1"/>
    <property type="molecule type" value="Genomic_DNA"/>
</dbReference>
<dbReference type="RefSeq" id="WP_001241357.1">
    <property type="nucleotide sequence ID" value="NZ_CP028304.1"/>
</dbReference>
<dbReference type="SMR" id="B7LDC3"/>
<dbReference type="GeneID" id="86947421"/>
<dbReference type="KEGG" id="eck:EC55989_2816"/>
<dbReference type="HOGENOM" id="CLU_107144_0_0_6"/>
<dbReference type="Proteomes" id="UP000000746">
    <property type="component" value="Chromosome"/>
</dbReference>
<dbReference type="GO" id="GO:0005829">
    <property type="term" value="C:cytosol"/>
    <property type="evidence" value="ECO:0007669"/>
    <property type="project" value="TreeGrafter"/>
</dbReference>
<dbReference type="GO" id="GO:0051537">
    <property type="term" value="F:2 iron, 2 sulfur cluster binding"/>
    <property type="evidence" value="ECO:0007669"/>
    <property type="project" value="UniProtKB-KW"/>
</dbReference>
<dbReference type="GO" id="GO:0003700">
    <property type="term" value="F:DNA-binding transcription factor activity"/>
    <property type="evidence" value="ECO:0007669"/>
    <property type="project" value="UniProtKB-UniRule"/>
</dbReference>
<dbReference type="GO" id="GO:0003690">
    <property type="term" value="F:double-stranded DNA binding"/>
    <property type="evidence" value="ECO:0007669"/>
    <property type="project" value="UniProtKB-UniRule"/>
</dbReference>
<dbReference type="GO" id="GO:0005506">
    <property type="term" value="F:iron ion binding"/>
    <property type="evidence" value="ECO:0007669"/>
    <property type="project" value="UniProtKB-UniRule"/>
</dbReference>
<dbReference type="FunFam" id="1.10.10.10:FF:000026">
    <property type="entry name" value="HTH-type transcriptional regulator IscR"/>
    <property type="match status" value="1"/>
</dbReference>
<dbReference type="Gene3D" id="1.10.10.10">
    <property type="entry name" value="Winged helix-like DNA-binding domain superfamily/Winged helix DNA-binding domain"/>
    <property type="match status" value="1"/>
</dbReference>
<dbReference type="HAMAP" id="MF_01176">
    <property type="entry name" value="HTH_type_IscR"/>
    <property type="match status" value="1"/>
</dbReference>
<dbReference type="InterPro" id="IPR010242">
    <property type="entry name" value="TF_HTH_IscR"/>
</dbReference>
<dbReference type="InterPro" id="IPR030489">
    <property type="entry name" value="TR_Rrf2-type_CS"/>
</dbReference>
<dbReference type="InterPro" id="IPR000944">
    <property type="entry name" value="Tscrpt_reg_Rrf2"/>
</dbReference>
<dbReference type="InterPro" id="IPR036388">
    <property type="entry name" value="WH-like_DNA-bd_sf"/>
</dbReference>
<dbReference type="InterPro" id="IPR036390">
    <property type="entry name" value="WH_DNA-bd_sf"/>
</dbReference>
<dbReference type="NCBIfam" id="TIGR02010">
    <property type="entry name" value="IscR"/>
    <property type="match status" value="1"/>
</dbReference>
<dbReference type="NCBIfam" id="NF008110">
    <property type="entry name" value="PRK10857.1"/>
    <property type="match status" value="1"/>
</dbReference>
<dbReference type="NCBIfam" id="TIGR00738">
    <property type="entry name" value="rrf2_super"/>
    <property type="match status" value="1"/>
</dbReference>
<dbReference type="PANTHER" id="PTHR33221:SF5">
    <property type="entry name" value="HTH-TYPE TRANSCRIPTIONAL REGULATOR ISCR"/>
    <property type="match status" value="1"/>
</dbReference>
<dbReference type="PANTHER" id="PTHR33221">
    <property type="entry name" value="WINGED HELIX-TURN-HELIX TRANSCRIPTIONAL REGULATOR, RRF2 FAMILY"/>
    <property type="match status" value="1"/>
</dbReference>
<dbReference type="Pfam" id="PF02082">
    <property type="entry name" value="Rrf2"/>
    <property type="match status" value="1"/>
</dbReference>
<dbReference type="SUPFAM" id="SSF46785">
    <property type="entry name" value="Winged helix' DNA-binding domain"/>
    <property type="match status" value="1"/>
</dbReference>
<dbReference type="PROSITE" id="PS01332">
    <property type="entry name" value="HTH_RRF2_1"/>
    <property type="match status" value="1"/>
</dbReference>
<dbReference type="PROSITE" id="PS51197">
    <property type="entry name" value="HTH_RRF2_2"/>
    <property type="match status" value="1"/>
</dbReference>
<proteinExistence type="inferred from homology"/>
<keyword id="KW-0001">2Fe-2S</keyword>
<keyword id="KW-0010">Activator</keyword>
<keyword id="KW-0238">DNA-binding</keyword>
<keyword id="KW-0408">Iron</keyword>
<keyword id="KW-0411">Iron-sulfur</keyword>
<keyword id="KW-0479">Metal-binding</keyword>
<keyword id="KW-1185">Reference proteome</keyword>
<keyword id="KW-0678">Repressor</keyword>
<keyword id="KW-0804">Transcription</keyword>
<keyword id="KW-0805">Transcription regulation</keyword>
<feature type="chain" id="PRO_1000164416" description="HTH-type transcriptional regulator IscR">
    <location>
        <begin position="1"/>
        <end position="162"/>
    </location>
</feature>
<feature type="domain" description="HTH rrf2-type" evidence="1">
    <location>
        <begin position="2"/>
        <end position="131"/>
    </location>
</feature>
<feature type="DNA-binding region" description="H-T-H motif" evidence="1">
    <location>
        <begin position="28"/>
        <end position="51"/>
    </location>
</feature>
<feature type="region of interest" description="Disordered" evidence="2">
    <location>
        <begin position="140"/>
        <end position="162"/>
    </location>
</feature>
<feature type="compositionally biased region" description="Basic and acidic residues" evidence="2">
    <location>
        <begin position="143"/>
        <end position="162"/>
    </location>
</feature>
<feature type="binding site" evidence="1">
    <location>
        <position position="92"/>
    </location>
    <ligand>
        <name>[2Fe-2S] cluster</name>
        <dbReference type="ChEBI" id="CHEBI:190135"/>
    </ligand>
</feature>
<feature type="binding site" evidence="1">
    <location>
        <position position="98"/>
    </location>
    <ligand>
        <name>[2Fe-2S] cluster</name>
        <dbReference type="ChEBI" id="CHEBI:190135"/>
    </ligand>
</feature>
<feature type="binding site" evidence="1">
    <location>
        <position position="104"/>
    </location>
    <ligand>
        <name>[2Fe-2S] cluster</name>
        <dbReference type="ChEBI" id="CHEBI:190135"/>
    </ligand>
</feature>